<feature type="chain" id="PRO_1000022212" description="Potassium-transporting ATPase potassium-binding subunit">
    <location>
        <begin position="1"/>
        <end position="578"/>
    </location>
</feature>
<feature type="transmembrane region" description="Helical" evidence="1">
    <location>
        <begin position="3"/>
        <end position="23"/>
    </location>
</feature>
<feature type="transmembrane region" description="Helical" evidence="1">
    <location>
        <begin position="67"/>
        <end position="87"/>
    </location>
</feature>
<feature type="transmembrane region" description="Helical" evidence="1">
    <location>
        <begin position="95"/>
        <end position="115"/>
    </location>
</feature>
<feature type="transmembrane region" description="Helical" evidence="1">
    <location>
        <begin position="136"/>
        <end position="156"/>
    </location>
</feature>
<feature type="transmembrane region" description="Helical" evidence="1">
    <location>
        <begin position="181"/>
        <end position="201"/>
    </location>
</feature>
<feature type="transmembrane region" description="Helical" evidence="1">
    <location>
        <begin position="264"/>
        <end position="284"/>
    </location>
</feature>
<feature type="transmembrane region" description="Helical" evidence="1">
    <location>
        <begin position="291"/>
        <end position="311"/>
    </location>
</feature>
<feature type="transmembrane region" description="Helical" evidence="1">
    <location>
        <begin position="396"/>
        <end position="416"/>
    </location>
</feature>
<feature type="transmembrane region" description="Helical" evidence="1">
    <location>
        <begin position="436"/>
        <end position="456"/>
    </location>
</feature>
<feature type="transmembrane region" description="Helical" evidence="1">
    <location>
        <begin position="504"/>
        <end position="524"/>
    </location>
</feature>
<feature type="transmembrane region" description="Helical" evidence="1">
    <location>
        <begin position="543"/>
        <end position="563"/>
    </location>
</feature>
<reference key="1">
    <citation type="submission" date="2006-01" db="EMBL/GenBank/DDBJ databases">
        <title>Complete sequence of Anaeromyxobacter dehalogenans 2CP-C.</title>
        <authorList>
            <person name="Copeland A."/>
            <person name="Lucas S."/>
            <person name="Lapidus A."/>
            <person name="Barry K."/>
            <person name="Detter J.C."/>
            <person name="Glavina T."/>
            <person name="Hammon N."/>
            <person name="Israni S."/>
            <person name="Pitluck S."/>
            <person name="Brettin T."/>
            <person name="Bruce D."/>
            <person name="Han C."/>
            <person name="Tapia R."/>
            <person name="Gilna P."/>
            <person name="Kiss H."/>
            <person name="Schmutz J."/>
            <person name="Larimer F."/>
            <person name="Land M."/>
            <person name="Kyrpides N."/>
            <person name="Anderson I."/>
            <person name="Sanford R.A."/>
            <person name="Ritalahti K.M."/>
            <person name="Thomas H.S."/>
            <person name="Kirby J.R."/>
            <person name="Zhulin I.B."/>
            <person name="Loeffler F.E."/>
            <person name="Richardson P."/>
        </authorList>
    </citation>
    <scope>NUCLEOTIDE SEQUENCE [LARGE SCALE GENOMIC DNA]</scope>
    <source>
        <strain>2CP-C</strain>
    </source>
</reference>
<organism>
    <name type="scientific">Anaeromyxobacter dehalogenans (strain 2CP-C)</name>
    <dbReference type="NCBI Taxonomy" id="290397"/>
    <lineage>
        <taxon>Bacteria</taxon>
        <taxon>Pseudomonadati</taxon>
        <taxon>Myxococcota</taxon>
        <taxon>Myxococcia</taxon>
        <taxon>Myxococcales</taxon>
        <taxon>Cystobacterineae</taxon>
        <taxon>Anaeromyxobacteraceae</taxon>
        <taxon>Anaeromyxobacter</taxon>
    </lineage>
</organism>
<gene>
    <name evidence="1" type="primary">kdpA</name>
    <name type="ordered locus">Adeh_0895</name>
</gene>
<comment type="function">
    <text evidence="1">Part of the high-affinity ATP-driven potassium transport (or Kdp) system, which catalyzes the hydrolysis of ATP coupled with the electrogenic transport of potassium into the cytoplasm. This subunit binds the periplasmic potassium ions and delivers the ions to the membrane domain of KdpB through an intramembrane tunnel.</text>
</comment>
<comment type="subunit">
    <text evidence="1">The system is composed of three essential subunits: KdpA, KdpB and KdpC.</text>
</comment>
<comment type="subcellular location">
    <subcellularLocation>
        <location evidence="1">Cell inner membrane</location>
        <topology evidence="1">Multi-pass membrane protein</topology>
    </subcellularLocation>
</comment>
<comment type="similarity">
    <text evidence="1">Belongs to the KdpA family.</text>
</comment>
<accession>Q2IPD5</accession>
<evidence type="ECO:0000255" key="1">
    <source>
        <dbReference type="HAMAP-Rule" id="MF_00275"/>
    </source>
</evidence>
<keyword id="KW-0997">Cell inner membrane</keyword>
<keyword id="KW-1003">Cell membrane</keyword>
<keyword id="KW-0406">Ion transport</keyword>
<keyword id="KW-0472">Membrane</keyword>
<keyword id="KW-0630">Potassium</keyword>
<keyword id="KW-0633">Potassium transport</keyword>
<keyword id="KW-1185">Reference proteome</keyword>
<keyword id="KW-0812">Transmembrane</keyword>
<keyword id="KW-1133">Transmembrane helix</keyword>
<keyword id="KW-0813">Transport</keyword>
<proteinExistence type="inferred from homology"/>
<protein>
    <recommendedName>
        <fullName evidence="1">Potassium-transporting ATPase potassium-binding subunit</fullName>
    </recommendedName>
    <alternativeName>
        <fullName evidence="1">ATP phosphohydrolase [potassium-transporting] A chain</fullName>
    </alternativeName>
    <alternativeName>
        <fullName evidence="1">Potassium-binding and translocating subunit A</fullName>
    </alternativeName>
    <alternativeName>
        <fullName evidence="1">Potassium-translocating ATPase A chain</fullName>
    </alternativeName>
</protein>
<name>KDPA_ANADE</name>
<dbReference type="EMBL" id="CP000251">
    <property type="protein sequence ID" value="ABC80670.1"/>
    <property type="molecule type" value="Genomic_DNA"/>
</dbReference>
<dbReference type="RefSeq" id="WP_011419953.1">
    <property type="nucleotide sequence ID" value="NC_007760.1"/>
</dbReference>
<dbReference type="SMR" id="Q2IPD5"/>
<dbReference type="STRING" id="290397.Adeh_0895"/>
<dbReference type="KEGG" id="ade:Adeh_0895"/>
<dbReference type="eggNOG" id="COG2060">
    <property type="taxonomic scope" value="Bacteria"/>
</dbReference>
<dbReference type="HOGENOM" id="CLU_018614_3_0_7"/>
<dbReference type="OrthoDB" id="9763796at2"/>
<dbReference type="Proteomes" id="UP000001935">
    <property type="component" value="Chromosome"/>
</dbReference>
<dbReference type="GO" id="GO:0005886">
    <property type="term" value="C:plasma membrane"/>
    <property type="evidence" value="ECO:0007669"/>
    <property type="project" value="UniProtKB-SubCell"/>
</dbReference>
<dbReference type="GO" id="GO:0008556">
    <property type="term" value="F:P-type potassium transmembrane transporter activity"/>
    <property type="evidence" value="ECO:0007669"/>
    <property type="project" value="InterPro"/>
</dbReference>
<dbReference type="GO" id="GO:0030955">
    <property type="term" value="F:potassium ion binding"/>
    <property type="evidence" value="ECO:0007669"/>
    <property type="project" value="UniProtKB-UniRule"/>
</dbReference>
<dbReference type="HAMAP" id="MF_00275">
    <property type="entry name" value="KdpA"/>
    <property type="match status" value="1"/>
</dbReference>
<dbReference type="InterPro" id="IPR004623">
    <property type="entry name" value="KdpA"/>
</dbReference>
<dbReference type="NCBIfam" id="TIGR00680">
    <property type="entry name" value="kdpA"/>
    <property type="match status" value="1"/>
</dbReference>
<dbReference type="PANTHER" id="PTHR30607">
    <property type="entry name" value="POTASSIUM-TRANSPORTING ATPASE A CHAIN"/>
    <property type="match status" value="1"/>
</dbReference>
<dbReference type="PANTHER" id="PTHR30607:SF2">
    <property type="entry name" value="POTASSIUM-TRANSPORTING ATPASE POTASSIUM-BINDING SUBUNIT"/>
    <property type="match status" value="1"/>
</dbReference>
<dbReference type="Pfam" id="PF03814">
    <property type="entry name" value="KdpA"/>
    <property type="match status" value="1"/>
</dbReference>
<dbReference type="PIRSF" id="PIRSF001294">
    <property type="entry name" value="K_ATPaseA"/>
    <property type="match status" value="1"/>
</dbReference>
<sequence length="578" mass="58754">MTAAALAEIAAFFGLLTAAAVPLGAYAARVLSTAPPHGRGPVARLERGLYRLAGVDPAEQMGWRRYAAAALTFNAAGLLAVFALERLQAALPGNPAGLPAVSPLVAWNTAVSFATNTNWQAYGGESTMSHLTQMGALTVQNFLSAATGISVLAALVRALAGPAGSGLGSFWVDLTRVTLRLLLPLAAALALLLAWQGVPQTSSAAARWPTLSATAASPGAEQVVALGPVASQVAVKQLGTNGGGYFNANSAHPYENPTPLSNLLEALSILLVPAALCFAFGALVKDRRQGWTVYSAMLAILVPLTVATVSAEQRGNPALAALGVDASPSALQPGGNMEGKEARLGPVDSAIWAAATTAASNGSVNAAHDSFTALGGLWPLWLMQLGEVVFGGVGSGLYGMLLFAILAVFLAGLMVGRTPEYLGKKVEAYEVKMASLAILAPSATVLLGTAAACLLPAGYGAVGNPGPHGFTELLYALSSTANNNGSAFGGLAASTPFWTLLTGVAMLVGRYWVMLPVLAIAGAFARKRPVPAGPGTLPTHGPLFAGLLVATVLLVGALTFLPALALGPVIEHLQAVPR</sequence>